<protein>
    <recommendedName>
        <fullName evidence="4">Fructokinase-1</fullName>
        <ecNumber evidence="1">2.7.1.4</ecNumber>
    </recommendedName>
    <alternativeName>
        <fullName evidence="2">Fructokinase I</fullName>
    </alternativeName>
    <alternativeName>
        <fullName evidence="2">OsFKI</fullName>
    </alternativeName>
</protein>
<reference key="1">
    <citation type="journal article" date="2002" name="Nature">
        <title>The genome sequence and structure of rice chromosome 1.</title>
        <authorList>
            <person name="Sasaki T."/>
            <person name="Matsumoto T."/>
            <person name="Yamamoto K."/>
            <person name="Sakata K."/>
            <person name="Baba T."/>
            <person name="Katayose Y."/>
            <person name="Wu J."/>
            <person name="Niimura Y."/>
            <person name="Cheng Z."/>
            <person name="Nagamura Y."/>
            <person name="Antonio B.A."/>
            <person name="Kanamori H."/>
            <person name="Hosokawa S."/>
            <person name="Masukawa M."/>
            <person name="Arikawa K."/>
            <person name="Chiden Y."/>
            <person name="Hayashi M."/>
            <person name="Okamoto M."/>
            <person name="Ando T."/>
            <person name="Aoki H."/>
            <person name="Arita K."/>
            <person name="Hamada M."/>
            <person name="Harada C."/>
            <person name="Hijishita S."/>
            <person name="Honda M."/>
            <person name="Ichikawa Y."/>
            <person name="Idonuma A."/>
            <person name="Iijima M."/>
            <person name="Ikeda M."/>
            <person name="Ikeno M."/>
            <person name="Ito S."/>
            <person name="Ito T."/>
            <person name="Ito Y."/>
            <person name="Ito Y."/>
            <person name="Iwabuchi A."/>
            <person name="Kamiya K."/>
            <person name="Karasawa W."/>
            <person name="Katagiri S."/>
            <person name="Kikuta A."/>
            <person name="Kobayashi N."/>
            <person name="Kono I."/>
            <person name="Machita K."/>
            <person name="Maehara T."/>
            <person name="Mizuno H."/>
            <person name="Mizubayashi T."/>
            <person name="Mukai Y."/>
            <person name="Nagasaki H."/>
            <person name="Nakashima M."/>
            <person name="Nakama Y."/>
            <person name="Nakamichi Y."/>
            <person name="Nakamura M."/>
            <person name="Namiki N."/>
            <person name="Negishi M."/>
            <person name="Ohta I."/>
            <person name="Ono N."/>
            <person name="Saji S."/>
            <person name="Sakai K."/>
            <person name="Shibata M."/>
            <person name="Shimokawa T."/>
            <person name="Shomura A."/>
            <person name="Song J."/>
            <person name="Takazaki Y."/>
            <person name="Terasawa K."/>
            <person name="Tsuji K."/>
            <person name="Waki K."/>
            <person name="Yamagata H."/>
            <person name="Yamane H."/>
            <person name="Yoshiki S."/>
            <person name="Yoshihara R."/>
            <person name="Yukawa K."/>
            <person name="Zhong H."/>
            <person name="Iwama H."/>
            <person name="Endo T."/>
            <person name="Ito H."/>
            <person name="Hahn J.H."/>
            <person name="Kim H.-I."/>
            <person name="Eun M.-Y."/>
            <person name="Yano M."/>
            <person name="Jiang J."/>
            <person name="Gojobori T."/>
        </authorList>
    </citation>
    <scope>NUCLEOTIDE SEQUENCE [LARGE SCALE GENOMIC DNA]</scope>
    <source>
        <strain>cv. Nipponbare</strain>
    </source>
</reference>
<reference key="2">
    <citation type="journal article" date="2005" name="Nature">
        <title>The map-based sequence of the rice genome.</title>
        <authorList>
            <consortium name="International rice genome sequencing project (IRGSP)"/>
        </authorList>
    </citation>
    <scope>NUCLEOTIDE SEQUENCE [LARGE SCALE GENOMIC DNA]</scope>
    <source>
        <strain>cv. Nipponbare</strain>
    </source>
</reference>
<reference key="3">
    <citation type="journal article" date="2008" name="Nucleic Acids Res.">
        <title>The rice annotation project database (RAP-DB): 2008 update.</title>
        <authorList>
            <consortium name="The rice annotation project (RAP)"/>
        </authorList>
    </citation>
    <scope>GENOME REANNOTATION</scope>
    <source>
        <strain>cv. Nipponbare</strain>
    </source>
</reference>
<reference key="4">
    <citation type="journal article" date="2013" name="Rice">
        <title>Improvement of the Oryza sativa Nipponbare reference genome using next generation sequence and optical map data.</title>
        <authorList>
            <person name="Kawahara Y."/>
            <person name="de la Bastide M."/>
            <person name="Hamilton J.P."/>
            <person name="Kanamori H."/>
            <person name="McCombie W.R."/>
            <person name="Ouyang S."/>
            <person name="Schwartz D.C."/>
            <person name="Tanaka T."/>
            <person name="Wu J."/>
            <person name="Zhou S."/>
            <person name="Childs K.L."/>
            <person name="Davidson R.M."/>
            <person name="Lin H."/>
            <person name="Quesada-Ocampo L."/>
            <person name="Vaillancourt B."/>
            <person name="Sakai H."/>
            <person name="Lee S.S."/>
            <person name="Kim J."/>
            <person name="Numa H."/>
            <person name="Itoh T."/>
            <person name="Buell C.R."/>
            <person name="Matsumoto T."/>
        </authorList>
    </citation>
    <scope>GENOME REANNOTATION</scope>
    <source>
        <strain>cv. Nipponbare</strain>
    </source>
</reference>
<reference key="5">
    <citation type="journal article" date="2003" name="Science">
        <title>Collection, mapping, and annotation of over 28,000 cDNA clones from japonica rice.</title>
        <authorList>
            <consortium name="The rice full-length cDNA consortium"/>
        </authorList>
    </citation>
    <scope>NUCLEOTIDE SEQUENCE [LARGE SCALE MRNA] (ISOFORMS 1 AND 2)</scope>
    <source>
        <strain>cv. Nipponbare</strain>
    </source>
</reference>
<reference key="6">
    <citation type="journal article" date="2003" name="Phytochemistry">
        <title>Isolation and characterization of two fructokinase cDNA clones from rice.</title>
        <authorList>
            <person name="Jiang H."/>
            <person name="Dian W."/>
            <person name="Liu F."/>
            <person name="Wu P."/>
        </authorList>
    </citation>
    <scope>FUNCTION</scope>
    <scope>CATALYTIC ACTIVITY</scope>
    <scope>BIOPHYSICOCHEMICAL PROPERTIES</scope>
    <scope>ALTERNATIVE SPLICING</scope>
    <scope>ACTIVITY REGULATION</scope>
    <scope>TISSUE SPECIFICITY</scope>
</reference>
<sequence length="323" mass="34720">MAGRSELVVSFGEMLIDFVPTVAGVSLAEAPAFVKAPGGAPANVAIAVARLGGGAAFVGKLGDDEFGRMLAAILRDNGVDDGGVVFDAGARTALAFVTLRADGEREFMFYRNPSADMLLTHAELNVELIKRAAVFHYGSISLIAEPCRSAHLRAMEIAKEAGALLSYDPNLREALWPSREEARTKILSIWDQADIVKVSEVELEFLTGIDSVEDDVVMKLWRPTMKLLLVTLGDQGCKYYARDFRGAVPSYKVQQVDTTGAGDAFVGALLRRIVQDPSSLQDQKKLEEAIKFANACGAITATKKGAIPSLPTEVEVLKLMESA</sequence>
<evidence type="ECO:0000269" key="1">
    <source>
    </source>
</evidence>
<evidence type="ECO:0000303" key="2">
    <source>
    </source>
</evidence>
<evidence type="ECO:0000303" key="3">
    <source>
    </source>
</evidence>
<evidence type="ECO:0000305" key="4"/>
<evidence type="ECO:0000312" key="5">
    <source>
        <dbReference type="EMBL" id="BAB90210.1"/>
    </source>
</evidence>
<evidence type="ECO:0000312" key="6">
    <source>
        <dbReference type="EMBL" id="BAC06252.1"/>
    </source>
</evidence>
<evidence type="ECO:0000312" key="7">
    <source>
        <dbReference type="EMBL" id="BAD87551.1"/>
    </source>
</evidence>
<evidence type="ECO:0000312" key="8">
    <source>
        <dbReference type="EMBL" id="BAS75687.1"/>
    </source>
</evidence>
<comment type="function">
    <text evidence="1">Fructokinase that may play an important role in maintaining the flux of carbon towards starch formation. May also be involved in a sugar-sensing pathway.</text>
</comment>
<comment type="catalytic activity">
    <reaction evidence="1">
        <text>D-fructose + ATP = D-fructose 6-phosphate + ADP + H(+)</text>
        <dbReference type="Rhea" id="RHEA:16125"/>
        <dbReference type="ChEBI" id="CHEBI:15378"/>
        <dbReference type="ChEBI" id="CHEBI:30616"/>
        <dbReference type="ChEBI" id="CHEBI:37721"/>
        <dbReference type="ChEBI" id="CHEBI:61527"/>
        <dbReference type="ChEBI" id="CHEBI:456216"/>
        <dbReference type="EC" id="2.7.1.4"/>
    </reaction>
</comment>
<comment type="activity regulation">
    <text evidence="1">Completely inhibited at 50 mM ATP, but not inhibited at high fructose concentration.</text>
</comment>
<comment type="biophysicochemical properties">
    <kinetics>
        <KM evidence="1">3.3 mM for fructose</KM>
    </kinetics>
</comment>
<comment type="pathway">
    <text evidence="4">Glycan biosynthesis; starch biosynthesis.</text>
</comment>
<comment type="alternative products">
    <event type="alternative splicing"/>
    <isoform>
        <id>Q0JGZ6-1</id>
        <id>Q944F4-1</id>
        <name>1</name>
        <sequence type="displayed"/>
    </isoform>
    <isoform>
        <id>Q0JGZ6-2</id>
        <id>Q944F4-2</id>
        <name>2</name>
        <sequence type="described" ref="VSP_018208"/>
    </isoform>
</comment>
<comment type="tissue specificity">
    <text evidence="1">Expressed in root, endosperm and leaf tissues.</text>
</comment>
<comment type="similarity">
    <text evidence="4">Belongs to the carbohydrate kinase PfkB family.</text>
</comment>
<keyword id="KW-0025">Alternative splicing</keyword>
<keyword id="KW-0067">ATP-binding</keyword>
<keyword id="KW-0119">Carbohydrate metabolism</keyword>
<keyword id="KW-0418">Kinase</keyword>
<keyword id="KW-0547">Nucleotide-binding</keyword>
<keyword id="KW-1185">Reference proteome</keyword>
<keyword id="KW-0808">Transferase</keyword>
<accession>Q0JGZ6</accession>
<accession>A0A0P0VBF8</accession>
<accession>B7E523</accession>
<accession>Q5JLV6</accession>
<accession>Q7F445</accession>
<accession>Q944F4</accession>
<feature type="chain" id="PRO_0000234064" description="Fructokinase-1">
    <location>
        <begin position="1"/>
        <end position="323"/>
    </location>
</feature>
<feature type="splice variant" id="VSP_018208" description="In isoform 2." evidence="3">
    <location>
        <begin position="18"/>
        <end position="95"/>
    </location>
</feature>
<gene>
    <name evidence="4" type="primary">FRK1</name>
    <name evidence="2" type="synonym">FKI</name>
    <name evidence="8" type="ordered locus">Os01g0894300</name>
    <name type="ordered locus">LOC_Os01g66940</name>
    <name evidence="5" type="ORF">B1078G07.45-1</name>
    <name evidence="7" type="ORF">B1078G07.45-2</name>
    <name evidence="6" type="ORF">P0696G06.9</name>
</gene>
<organism>
    <name type="scientific">Oryza sativa subsp. japonica</name>
    <name type="common">Rice</name>
    <dbReference type="NCBI Taxonomy" id="39947"/>
    <lineage>
        <taxon>Eukaryota</taxon>
        <taxon>Viridiplantae</taxon>
        <taxon>Streptophyta</taxon>
        <taxon>Embryophyta</taxon>
        <taxon>Tracheophyta</taxon>
        <taxon>Spermatophyta</taxon>
        <taxon>Magnoliopsida</taxon>
        <taxon>Liliopsida</taxon>
        <taxon>Poales</taxon>
        <taxon>Poaceae</taxon>
        <taxon>BOP clade</taxon>
        <taxon>Oryzoideae</taxon>
        <taxon>Oryzeae</taxon>
        <taxon>Oryzinae</taxon>
        <taxon>Oryza</taxon>
        <taxon>Oryza sativa</taxon>
    </lineage>
</organism>
<name>SCRK1_ORYSJ</name>
<dbReference type="EC" id="2.7.1.4" evidence="1"/>
<dbReference type="EMBL" id="AP003316">
    <property type="protein sequence ID" value="BAC06252.1"/>
    <property type="molecule type" value="Genomic_DNA"/>
</dbReference>
<dbReference type="EMBL" id="AP003407">
    <property type="protein sequence ID" value="BAB90210.1"/>
    <property type="molecule type" value="Genomic_DNA"/>
</dbReference>
<dbReference type="EMBL" id="AP003407">
    <property type="protein sequence ID" value="BAD87551.1"/>
    <property type="molecule type" value="Genomic_DNA"/>
</dbReference>
<dbReference type="EMBL" id="AP008207">
    <property type="protein sequence ID" value="BAF06982.2"/>
    <property type="molecule type" value="Genomic_DNA"/>
</dbReference>
<dbReference type="EMBL" id="AP014957">
    <property type="protein sequence ID" value="BAS75686.1"/>
    <property type="molecule type" value="Genomic_DNA"/>
</dbReference>
<dbReference type="EMBL" id="AP014957">
    <property type="protein sequence ID" value="BAS75687.1"/>
    <property type="molecule type" value="Genomic_DNA"/>
</dbReference>
<dbReference type="EMBL" id="AK060500">
    <property type="protein sequence ID" value="BAG87470.1"/>
    <property type="molecule type" value="mRNA"/>
</dbReference>
<dbReference type="EMBL" id="AK120887">
    <property type="status" value="NOT_ANNOTATED_CDS"/>
    <property type="molecule type" value="mRNA"/>
</dbReference>
<dbReference type="RefSeq" id="XP_015621961.1">
    <property type="nucleotide sequence ID" value="XM_015766475.1"/>
</dbReference>
<dbReference type="SMR" id="Q0JGZ6"/>
<dbReference type="FunCoup" id="Q0JGZ6">
    <property type="interactions" value="293"/>
</dbReference>
<dbReference type="STRING" id="39947.Q0JGZ6"/>
<dbReference type="PaxDb" id="39947-Q0JGZ6"/>
<dbReference type="EnsemblPlants" id="Os01t0894300-01">
    <molecule id="Q0JGZ6-1"/>
    <property type="protein sequence ID" value="Os01t0894300-01"/>
    <property type="gene ID" value="Os01g0894300"/>
</dbReference>
<dbReference type="Gramene" id="Os01t0894300-01">
    <molecule id="Q0JGZ6-1"/>
    <property type="protein sequence ID" value="Os01t0894300-01"/>
    <property type="gene ID" value="Os01g0894300"/>
</dbReference>
<dbReference type="KEGG" id="dosa:Os01g0894300"/>
<dbReference type="eggNOG" id="KOG2855">
    <property type="taxonomic scope" value="Eukaryota"/>
</dbReference>
<dbReference type="HOGENOM" id="CLU_027634_6_1_1"/>
<dbReference type="InParanoid" id="Q0JGZ6"/>
<dbReference type="OMA" id="NYREDLW"/>
<dbReference type="OrthoDB" id="415590at2759"/>
<dbReference type="BRENDA" id="2.7.1.4">
    <property type="organism ID" value="4460"/>
</dbReference>
<dbReference type="UniPathway" id="UPA00152"/>
<dbReference type="Proteomes" id="UP000000763">
    <property type="component" value="Chromosome 1"/>
</dbReference>
<dbReference type="Proteomes" id="UP000059680">
    <property type="component" value="Chromosome 1"/>
</dbReference>
<dbReference type="ExpressionAtlas" id="Q0JGZ6">
    <property type="expression patterns" value="baseline and differential"/>
</dbReference>
<dbReference type="GO" id="GO:0005829">
    <property type="term" value="C:cytosol"/>
    <property type="evidence" value="ECO:0000318"/>
    <property type="project" value="GO_Central"/>
</dbReference>
<dbReference type="GO" id="GO:0005524">
    <property type="term" value="F:ATP binding"/>
    <property type="evidence" value="ECO:0007669"/>
    <property type="project" value="UniProtKB-KW"/>
</dbReference>
<dbReference type="GO" id="GO:0008865">
    <property type="term" value="F:fructokinase activity"/>
    <property type="evidence" value="ECO:0000318"/>
    <property type="project" value="GO_Central"/>
</dbReference>
<dbReference type="GO" id="GO:0006000">
    <property type="term" value="P:fructose metabolic process"/>
    <property type="evidence" value="ECO:0000318"/>
    <property type="project" value="GO_Central"/>
</dbReference>
<dbReference type="GO" id="GO:0019252">
    <property type="term" value="P:starch biosynthetic process"/>
    <property type="evidence" value="ECO:0007669"/>
    <property type="project" value="UniProtKB-UniPathway"/>
</dbReference>
<dbReference type="CDD" id="cd01167">
    <property type="entry name" value="bac_FRK"/>
    <property type="match status" value="1"/>
</dbReference>
<dbReference type="FunFam" id="3.40.1190.20:FF:000005">
    <property type="entry name" value="Probable fructokinase-2"/>
    <property type="match status" value="1"/>
</dbReference>
<dbReference type="Gene3D" id="3.40.1190.20">
    <property type="match status" value="1"/>
</dbReference>
<dbReference type="InterPro" id="IPR002173">
    <property type="entry name" value="Carboh/pur_kinase_PfkB_CS"/>
</dbReference>
<dbReference type="InterPro" id="IPR050306">
    <property type="entry name" value="PfkB_Carbo_kinase"/>
</dbReference>
<dbReference type="InterPro" id="IPR011611">
    <property type="entry name" value="PfkB_dom"/>
</dbReference>
<dbReference type="InterPro" id="IPR002139">
    <property type="entry name" value="Ribo/fructo_kinase"/>
</dbReference>
<dbReference type="InterPro" id="IPR029056">
    <property type="entry name" value="Ribokinase-like"/>
</dbReference>
<dbReference type="PANTHER" id="PTHR43085:SF24">
    <property type="entry name" value="FRUCTOKINASE-4-RELATED"/>
    <property type="match status" value="1"/>
</dbReference>
<dbReference type="PANTHER" id="PTHR43085">
    <property type="entry name" value="HEXOKINASE FAMILY MEMBER"/>
    <property type="match status" value="1"/>
</dbReference>
<dbReference type="Pfam" id="PF00294">
    <property type="entry name" value="PfkB"/>
    <property type="match status" value="1"/>
</dbReference>
<dbReference type="PRINTS" id="PR00990">
    <property type="entry name" value="RIBOKINASE"/>
</dbReference>
<dbReference type="SUPFAM" id="SSF53613">
    <property type="entry name" value="Ribokinase-like"/>
    <property type="match status" value="1"/>
</dbReference>
<dbReference type="PROSITE" id="PS00583">
    <property type="entry name" value="PFKB_KINASES_1"/>
    <property type="match status" value="1"/>
</dbReference>
<dbReference type="PROSITE" id="PS00584">
    <property type="entry name" value="PFKB_KINASES_2"/>
    <property type="match status" value="1"/>
</dbReference>
<proteinExistence type="evidence at protein level"/>